<protein>
    <recommendedName>
        <fullName evidence="1">Large ribosomal subunit protein uL15</fullName>
    </recommendedName>
    <alternativeName>
        <fullName evidence="3">50S ribosomal protein L15</fullName>
    </alternativeName>
</protein>
<comment type="function">
    <text evidence="1">Binds to the 23S rRNA.</text>
</comment>
<comment type="subunit">
    <text evidence="1">Part of the 50S ribosomal subunit.</text>
</comment>
<comment type="similarity">
    <text evidence="1">Belongs to the universal ribosomal protein uL15 family.</text>
</comment>
<feature type="chain" id="PRO_0000251588" description="Large ribosomal subunit protein uL15">
    <location>
        <begin position="1"/>
        <end position="147"/>
    </location>
</feature>
<feature type="region of interest" description="Disordered" evidence="2">
    <location>
        <begin position="1"/>
        <end position="61"/>
    </location>
</feature>
<feature type="compositionally biased region" description="Basic and acidic residues" evidence="2">
    <location>
        <begin position="1"/>
        <end position="20"/>
    </location>
</feature>
<feature type="compositionally biased region" description="Gly residues" evidence="2">
    <location>
        <begin position="23"/>
        <end position="33"/>
    </location>
</feature>
<feature type="compositionally biased region" description="Basic residues" evidence="2">
    <location>
        <begin position="34"/>
        <end position="47"/>
    </location>
</feature>
<name>RL15_XANE5</name>
<organism>
    <name type="scientific">Xanthomonas euvesicatoria pv. vesicatoria (strain 85-10)</name>
    <name type="common">Xanthomonas campestris pv. vesicatoria</name>
    <dbReference type="NCBI Taxonomy" id="316273"/>
    <lineage>
        <taxon>Bacteria</taxon>
        <taxon>Pseudomonadati</taxon>
        <taxon>Pseudomonadota</taxon>
        <taxon>Gammaproteobacteria</taxon>
        <taxon>Lysobacterales</taxon>
        <taxon>Lysobacteraceae</taxon>
        <taxon>Xanthomonas</taxon>
    </lineage>
</organism>
<gene>
    <name evidence="1" type="primary">rplO</name>
    <name type="ordered locus">XCV1018</name>
</gene>
<keyword id="KW-0687">Ribonucleoprotein</keyword>
<keyword id="KW-0689">Ribosomal protein</keyword>
<keyword id="KW-0694">RNA-binding</keyword>
<keyword id="KW-0699">rRNA-binding</keyword>
<accession>Q3BWW4</accession>
<evidence type="ECO:0000255" key="1">
    <source>
        <dbReference type="HAMAP-Rule" id="MF_01341"/>
    </source>
</evidence>
<evidence type="ECO:0000256" key="2">
    <source>
        <dbReference type="SAM" id="MobiDB-lite"/>
    </source>
</evidence>
<evidence type="ECO:0000305" key="3"/>
<proteinExistence type="inferred from homology"/>
<sequence length="147" mass="15320">MTLRLNDLKPADGARTERTRVGRGIGSGLGKTAGRGHKGSFARKGGGKIKAGFEGGQTPMQRRLPKIGFRSKMARDTAEVLSYQLDKLDAGDVDFAALRAANLVPSRAKKAKVVLKGELSKKFVLKGVAATAGAKAAIEAAGGSVEE</sequence>
<reference key="1">
    <citation type="journal article" date="2005" name="J. Bacteriol.">
        <title>Insights into genome plasticity and pathogenicity of the plant pathogenic Bacterium Xanthomonas campestris pv. vesicatoria revealed by the complete genome sequence.</title>
        <authorList>
            <person name="Thieme F."/>
            <person name="Koebnik R."/>
            <person name="Bekel T."/>
            <person name="Berger C."/>
            <person name="Boch J."/>
            <person name="Buettner D."/>
            <person name="Caldana C."/>
            <person name="Gaigalat L."/>
            <person name="Goesmann A."/>
            <person name="Kay S."/>
            <person name="Kirchner O."/>
            <person name="Lanz C."/>
            <person name="Linke B."/>
            <person name="McHardy A.C."/>
            <person name="Meyer F."/>
            <person name="Mittenhuber G."/>
            <person name="Nies D.H."/>
            <person name="Niesbach-Kloesgen U."/>
            <person name="Patschkowski T."/>
            <person name="Rueckert C."/>
            <person name="Rupp O."/>
            <person name="Schneiker S."/>
            <person name="Schuster S.C."/>
            <person name="Vorhoelter F.J."/>
            <person name="Weber E."/>
            <person name="Puehler A."/>
            <person name="Bonas U."/>
            <person name="Bartels D."/>
            <person name="Kaiser O."/>
        </authorList>
    </citation>
    <scope>NUCLEOTIDE SEQUENCE [LARGE SCALE GENOMIC DNA]</scope>
    <source>
        <strain>85-10</strain>
    </source>
</reference>
<dbReference type="EMBL" id="AM039952">
    <property type="protein sequence ID" value="CAJ22649.1"/>
    <property type="molecule type" value="Genomic_DNA"/>
</dbReference>
<dbReference type="RefSeq" id="WP_011346542.1">
    <property type="nucleotide sequence ID" value="NZ_CP017190.1"/>
</dbReference>
<dbReference type="SMR" id="Q3BWW4"/>
<dbReference type="STRING" id="456327.BJD11_17645"/>
<dbReference type="GeneID" id="97509355"/>
<dbReference type="KEGG" id="xcv:XCV1018"/>
<dbReference type="eggNOG" id="COG0200">
    <property type="taxonomic scope" value="Bacteria"/>
</dbReference>
<dbReference type="HOGENOM" id="CLU_055188_4_2_6"/>
<dbReference type="Proteomes" id="UP000007069">
    <property type="component" value="Chromosome"/>
</dbReference>
<dbReference type="GO" id="GO:0022625">
    <property type="term" value="C:cytosolic large ribosomal subunit"/>
    <property type="evidence" value="ECO:0007669"/>
    <property type="project" value="TreeGrafter"/>
</dbReference>
<dbReference type="GO" id="GO:0019843">
    <property type="term" value="F:rRNA binding"/>
    <property type="evidence" value="ECO:0007669"/>
    <property type="project" value="UniProtKB-UniRule"/>
</dbReference>
<dbReference type="GO" id="GO:0003735">
    <property type="term" value="F:structural constituent of ribosome"/>
    <property type="evidence" value="ECO:0007669"/>
    <property type="project" value="InterPro"/>
</dbReference>
<dbReference type="GO" id="GO:0006412">
    <property type="term" value="P:translation"/>
    <property type="evidence" value="ECO:0007669"/>
    <property type="project" value="UniProtKB-UniRule"/>
</dbReference>
<dbReference type="FunFam" id="3.100.10.10:FF:000008">
    <property type="entry name" value="50S ribosomal protein L15"/>
    <property type="match status" value="1"/>
</dbReference>
<dbReference type="Gene3D" id="3.100.10.10">
    <property type="match status" value="1"/>
</dbReference>
<dbReference type="HAMAP" id="MF_01341">
    <property type="entry name" value="Ribosomal_uL15"/>
    <property type="match status" value="1"/>
</dbReference>
<dbReference type="InterPro" id="IPR030878">
    <property type="entry name" value="Ribosomal_uL15"/>
</dbReference>
<dbReference type="InterPro" id="IPR021131">
    <property type="entry name" value="Ribosomal_uL15/eL18"/>
</dbReference>
<dbReference type="InterPro" id="IPR036227">
    <property type="entry name" value="Ribosomal_uL15/eL18_sf"/>
</dbReference>
<dbReference type="InterPro" id="IPR005749">
    <property type="entry name" value="Ribosomal_uL15_bac-type"/>
</dbReference>
<dbReference type="InterPro" id="IPR001196">
    <property type="entry name" value="Ribosomal_uL15_CS"/>
</dbReference>
<dbReference type="NCBIfam" id="TIGR01071">
    <property type="entry name" value="rplO_bact"/>
    <property type="match status" value="1"/>
</dbReference>
<dbReference type="PANTHER" id="PTHR12934">
    <property type="entry name" value="50S RIBOSOMAL PROTEIN L15"/>
    <property type="match status" value="1"/>
</dbReference>
<dbReference type="PANTHER" id="PTHR12934:SF11">
    <property type="entry name" value="LARGE RIBOSOMAL SUBUNIT PROTEIN UL15M"/>
    <property type="match status" value="1"/>
</dbReference>
<dbReference type="Pfam" id="PF00828">
    <property type="entry name" value="Ribosomal_L27A"/>
    <property type="match status" value="1"/>
</dbReference>
<dbReference type="SUPFAM" id="SSF52080">
    <property type="entry name" value="Ribosomal proteins L15p and L18e"/>
    <property type="match status" value="1"/>
</dbReference>
<dbReference type="PROSITE" id="PS00475">
    <property type="entry name" value="RIBOSOMAL_L15"/>
    <property type="match status" value="1"/>
</dbReference>